<protein>
    <recommendedName>
        <fullName>N,O-diacetylmuramidase</fullName>
        <ecNumber>3.2.1.17</ecNumber>
    </recommendedName>
    <alternativeName>
        <fullName>Lysozyme CH</fullName>
    </alternativeName>
</protein>
<sequence length="211" mass="22414">TVQGFDISSYQPSVNFAGAYSAGARFVIIKATEGTSYTNPSFSSQYNGATTATGNYFIRGGYHFAHPGETTGAAQADYFIAHGGGWSGDGITLPGMLDLESEGSNPACWGLSAASMVAWIKAFSDRYHAVTGRYPMLYTNPSWWSSCTGNSNAFVNTNPLVLANRYASAPGTIPGGWPYQTIWQNSDAYAYGGSNNFINGSIDNLKKLATG</sequence>
<evidence type="ECO:0000255" key="1">
    <source>
        <dbReference type="PROSITE-ProRule" id="PRU10065"/>
    </source>
</evidence>
<evidence type="ECO:0000269" key="2">
    <source>
    </source>
</evidence>
<evidence type="ECO:0000269" key="3">
    <source>
    </source>
</evidence>
<evidence type="ECO:0000305" key="4"/>
<comment type="function">
    <text>This enzyme has both lysozyme (acetylmuramidase) and diacetylmuramidase activities.</text>
</comment>
<comment type="catalytic activity">
    <reaction>
        <text>Hydrolysis of (1-&gt;4)-beta-linkages between N-acetylmuramic acid and N-acetyl-D-glucosamine residues in a peptidoglycan and between N-acetyl-D-glucosamine residues in chitodextrins.</text>
        <dbReference type="EC" id="3.2.1.17"/>
    </reaction>
</comment>
<comment type="subcellular location">
    <subcellularLocation>
        <location>Secreted</location>
        <location>Extracellular space</location>
    </subcellularLocation>
</comment>
<comment type="similarity">
    <text evidence="4">Belongs to the glycosyl hydrolase 25 family.</text>
</comment>
<proteinExistence type="evidence at protein level"/>
<reference key="1">
    <citation type="journal article" date="1975" name="J. Biol. Chem.">
        <title>The N, O-diacetylmuramidase of Chalaropsis species. V. The complete amino acid sequence.</title>
        <authorList>
            <person name="Felch J.W."/>
            <person name="Inagami T."/>
            <person name="Hash J.H."/>
        </authorList>
    </citation>
    <scope>PROTEIN SEQUENCE</scope>
</reference>
<reference key="2">
    <citation type="journal article" date="1978" name="J. Biol. Chem.">
        <title>The N,O-diacetylmuramidase of Chalaropsis species. Identification of aspartyl and glutamyl residues in the active site.</title>
        <authorList>
            <person name="Fouche P.B."/>
            <person name="Hash J.H."/>
        </authorList>
    </citation>
    <scope>ACTIVE SITE</scope>
</reference>
<dbReference type="EC" id="3.2.1.17"/>
<dbReference type="PIR" id="A00876">
    <property type="entry name" value="MUKAD"/>
</dbReference>
<dbReference type="SMR" id="P00721"/>
<dbReference type="CAZy" id="GH25">
    <property type="family name" value="Glycoside Hydrolase Family 25"/>
</dbReference>
<dbReference type="GO" id="GO:0005576">
    <property type="term" value="C:extracellular region"/>
    <property type="evidence" value="ECO:0007669"/>
    <property type="project" value="UniProtKB-SubCell"/>
</dbReference>
<dbReference type="GO" id="GO:0003796">
    <property type="term" value="F:lysozyme activity"/>
    <property type="evidence" value="ECO:0007669"/>
    <property type="project" value="UniProtKB-EC"/>
</dbReference>
<dbReference type="GO" id="GO:0016052">
    <property type="term" value="P:carbohydrate catabolic process"/>
    <property type="evidence" value="ECO:0007669"/>
    <property type="project" value="TreeGrafter"/>
</dbReference>
<dbReference type="GO" id="GO:0016998">
    <property type="term" value="P:cell wall macromolecule catabolic process"/>
    <property type="evidence" value="ECO:0007669"/>
    <property type="project" value="InterPro"/>
</dbReference>
<dbReference type="GO" id="GO:0042742">
    <property type="term" value="P:defense response to bacterium"/>
    <property type="evidence" value="ECO:0007669"/>
    <property type="project" value="UniProtKB-KW"/>
</dbReference>
<dbReference type="GO" id="GO:0031640">
    <property type="term" value="P:killing of cells of another organism"/>
    <property type="evidence" value="ECO:0007669"/>
    <property type="project" value="UniProtKB-KW"/>
</dbReference>
<dbReference type="GO" id="GO:0009253">
    <property type="term" value="P:peptidoglycan catabolic process"/>
    <property type="evidence" value="ECO:0007669"/>
    <property type="project" value="InterPro"/>
</dbReference>
<dbReference type="CDD" id="cd06412">
    <property type="entry name" value="GH25_CH-type"/>
    <property type="match status" value="1"/>
</dbReference>
<dbReference type="FunFam" id="3.20.20.80:FF:000060">
    <property type="entry name" value="Lysozyme M1"/>
    <property type="match status" value="1"/>
</dbReference>
<dbReference type="Gene3D" id="3.20.20.80">
    <property type="entry name" value="Glycosidases"/>
    <property type="match status" value="1"/>
</dbReference>
<dbReference type="InterPro" id="IPR002053">
    <property type="entry name" value="Glyco_hydro_25"/>
</dbReference>
<dbReference type="InterPro" id="IPR008270">
    <property type="entry name" value="Glyco_hydro_25_AS"/>
</dbReference>
<dbReference type="InterPro" id="IPR018077">
    <property type="entry name" value="Glyco_hydro_fam25_subgr"/>
</dbReference>
<dbReference type="InterPro" id="IPR017853">
    <property type="entry name" value="Glycoside_hydrolase_SF"/>
</dbReference>
<dbReference type="PANTHER" id="PTHR34135">
    <property type="entry name" value="LYSOZYME"/>
    <property type="match status" value="1"/>
</dbReference>
<dbReference type="PANTHER" id="PTHR34135:SF2">
    <property type="entry name" value="LYSOZYME"/>
    <property type="match status" value="1"/>
</dbReference>
<dbReference type="Pfam" id="PF01183">
    <property type="entry name" value="Glyco_hydro_25"/>
    <property type="match status" value="1"/>
</dbReference>
<dbReference type="SMART" id="SM00641">
    <property type="entry name" value="Glyco_25"/>
    <property type="match status" value="1"/>
</dbReference>
<dbReference type="SUPFAM" id="SSF51445">
    <property type="entry name" value="(Trans)glycosidases"/>
    <property type="match status" value="1"/>
</dbReference>
<dbReference type="PROSITE" id="PS00953">
    <property type="entry name" value="GLYCOSYL_HYDROL_F25_1"/>
    <property type="match status" value="1"/>
</dbReference>
<dbReference type="PROSITE" id="PS51904">
    <property type="entry name" value="GLYCOSYL_HYDROL_F25_2"/>
    <property type="match status" value="1"/>
</dbReference>
<organism>
    <name type="scientific">Chalaropsis sp</name>
    <dbReference type="NCBI Taxonomy" id="36534"/>
    <lineage>
        <taxon>Eukaryota</taxon>
        <taxon>Fungi</taxon>
        <taxon>Dikarya</taxon>
        <taxon>Ascomycota</taxon>
        <taxon>Pezizomycotina</taxon>
        <taxon>Leotiomycetes</taxon>
        <taxon>Helotiales</taxon>
        <taxon>Helotiales incertae sedis</taxon>
        <taxon>Chalara</taxon>
    </lineage>
</organism>
<name>LYS_CHASP</name>
<accession>P00721</accession>
<keyword id="KW-0929">Antimicrobial</keyword>
<keyword id="KW-0081">Bacteriolytic enzyme</keyword>
<keyword id="KW-0903">Direct protein sequencing</keyword>
<keyword id="KW-1015">Disulfide bond</keyword>
<keyword id="KW-0326">Glycosidase</keyword>
<keyword id="KW-0378">Hydrolase</keyword>
<keyword id="KW-0964">Secreted</keyword>
<feature type="chain" id="PRO_0000208263" description="N,O-diacetylmuramidase">
    <location>
        <begin position="1"/>
        <end position="211"/>
    </location>
</feature>
<feature type="active site" evidence="1 3">
    <location>
        <position position="6"/>
    </location>
</feature>
<feature type="active site" evidence="1">
    <location>
        <position position="100"/>
    </location>
</feature>
<feature type="disulfide bond" evidence="2">
    <location>
        <begin position="108"/>
        <end position="147"/>
    </location>
</feature>